<gene>
    <name evidence="1" type="primary">yacL</name>
    <name type="ordered locus">SeAg_B0191</name>
</gene>
<proteinExistence type="inferred from homology"/>
<evidence type="ECO:0000255" key="1">
    <source>
        <dbReference type="HAMAP-Rule" id="MF_01053"/>
    </source>
</evidence>
<feature type="chain" id="PRO_1000136301" description="UPF0231 protein YacL">
    <location>
        <begin position="1"/>
        <end position="120"/>
    </location>
</feature>
<comment type="similarity">
    <text evidence="1">Belongs to the UPF0231 family.</text>
</comment>
<dbReference type="EMBL" id="CP001138">
    <property type="protein sequence ID" value="ACH49981.1"/>
    <property type="molecule type" value="Genomic_DNA"/>
</dbReference>
<dbReference type="RefSeq" id="WP_000384308.1">
    <property type="nucleotide sequence ID" value="NC_011149.1"/>
</dbReference>
<dbReference type="SMR" id="B5F808"/>
<dbReference type="KEGG" id="sea:SeAg_B0191"/>
<dbReference type="HOGENOM" id="CLU_139226_0_0_6"/>
<dbReference type="Proteomes" id="UP000008819">
    <property type="component" value="Chromosome"/>
</dbReference>
<dbReference type="HAMAP" id="MF_01053">
    <property type="entry name" value="UPF0231"/>
    <property type="match status" value="1"/>
</dbReference>
<dbReference type="InterPro" id="IPR008249">
    <property type="entry name" value="UPF0231"/>
</dbReference>
<dbReference type="NCBIfam" id="NF003574">
    <property type="entry name" value="PRK05248.1-1"/>
    <property type="match status" value="1"/>
</dbReference>
<dbReference type="NCBIfam" id="NF003576">
    <property type="entry name" value="PRK05248.1-3"/>
    <property type="match status" value="1"/>
</dbReference>
<dbReference type="Pfam" id="PF06062">
    <property type="entry name" value="UPF0231"/>
    <property type="match status" value="1"/>
</dbReference>
<dbReference type="PIRSF" id="PIRSF006287">
    <property type="entry name" value="UCP006287"/>
    <property type="match status" value="1"/>
</dbReference>
<sequence>MDYEFLRDVTGGVKVRMSMGHEVVGHWFNEEVKDNLSLLDEVEQAARTVKGSERSWQRAGHEYTIWMDGEEVMIRANQLDFSGDEMEEGMSYYDEESLSLCGMEDFLRVVAAYREFVSKA</sequence>
<accession>B5F808</accession>
<protein>
    <recommendedName>
        <fullName evidence="1">UPF0231 protein YacL</fullName>
    </recommendedName>
</protein>
<name>YACL_SALA4</name>
<organism>
    <name type="scientific">Salmonella agona (strain SL483)</name>
    <dbReference type="NCBI Taxonomy" id="454166"/>
    <lineage>
        <taxon>Bacteria</taxon>
        <taxon>Pseudomonadati</taxon>
        <taxon>Pseudomonadota</taxon>
        <taxon>Gammaproteobacteria</taxon>
        <taxon>Enterobacterales</taxon>
        <taxon>Enterobacteriaceae</taxon>
        <taxon>Salmonella</taxon>
    </lineage>
</organism>
<reference key="1">
    <citation type="journal article" date="2011" name="J. Bacteriol.">
        <title>Comparative genomics of 28 Salmonella enterica isolates: evidence for CRISPR-mediated adaptive sublineage evolution.</title>
        <authorList>
            <person name="Fricke W.F."/>
            <person name="Mammel M.K."/>
            <person name="McDermott P.F."/>
            <person name="Tartera C."/>
            <person name="White D.G."/>
            <person name="Leclerc J.E."/>
            <person name="Ravel J."/>
            <person name="Cebula T.A."/>
        </authorList>
    </citation>
    <scope>NUCLEOTIDE SEQUENCE [LARGE SCALE GENOMIC DNA]</scope>
    <source>
        <strain>SL483</strain>
    </source>
</reference>